<proteinExistence type="inferred from homology"/>
<evidence type="ECO:0000255" key="1">
    <source>
        <dbReference type="HAMAP-Rule" id="MF_01316"/>
    </source>
</evidence>
<name>PSBI_CHAVU</name>
<feature type="chain" id="PRO_0000275785" description="Photosystem II reaction center protein I">
    <location>
        <begin position="1"/>
        <end position="36"/>
    </location>
</feature>
<feature type="transmembrane region" description="Helical" evidence="1">
    <location>
        <begin position="4"/>
        <end position="24"/>
    </location>
</feature>
<accession>Q1ACL7</accession>
<geneLocation type="chloroplast"/>
<dbReference type="EMBL" id="DQ229107">
    <property type="protein sequence ID" value="ABA61961.1"/>
    <property type="molecule type" value="Genomic_DNA"/>
</dbReference>
<dbReference type="RefSeq" id="YP_635730.1">
    <property type="nucleotide sequence ID" value="NC_008097.1"/>
</dbReference>
<dbReference type="SMR" id="Q1ACL7"/>
<dbReference type="GeneID" id="4100332"/>
<dbReference type="GO" id="GO:0009535">
    <property type="term" value="C:chloroplast thylakoid membrane"/>
    <property type="evidence" value="ECO:0007669"/>
    <property type="project" value="UniProtKB-SubCell"/>
</dbReference>
<dbReference type="GO" id="GO:0009539">
    <property type="term" value="C:photosystem II reaction center"/>
    <property type="evidence" value="ECO:0007669"/>
    <property type="project" value="InterPro"/>
</dbReference>
<dbReference type="GO" id="GO:0015979">
    <property type="term" value="P:photosynthesis"/>
    <property type="evidence" value="ECO:0007669"/>
    <property type="project" value="UniProtKB-UniRule"/>
</dbReference>
<dbReference type="HAMAP" id="MF_01316">
    <property type="entry name" value="PSII_PsbI"/>
    <property type="match status" value="1"/>
</dbReference>
<dbReference type="InterPro" id="IPR003686">
    <property type="entry name" value="PSII_PsbI"/>
</dbReference>
<dbReference type="InterPro" id="IPR037271">
    <property type="entry name" value="PSII_PsbI_sf"/>
</dbReference>
<dbReference type="NCBIfam" id="NF002735">
    <property type="entry name" value="PRK02655.1"/>
    <property type="match status" value="1"/>
</dbReference>
<dbReference type="PANTHER" id="PTHR35772">
    <property type="entry name" value="PHOTOSYSTEM II REACTION CENTER PROTEIN I"/>
    <property type="match status" value="1"/>
</dbReference>
<dbReference type="PANTHER" id="PTHR35772:SF1">
    <property type="entry name" value="PHOTOSYSTEM II REACTION CENTER PROTEIN I"/>
    <property type="match status" value="1"/>
</dbReference>
<dbReference type="Pfam" id="PF02532">
    <property type="entry name" value="PsbI"/>
    <property type="match status" value="1"/>
</dbReference>
<dbReference type="SUPFAM" id="SSF161041">
    <property type="entry name" value="Photosystem II reaction center protein I, PsbI"/>
    <property type="match status" value="1"/>
</dbReference>
<organism>
    <name type="scientific">Chara vulgaris</name>
    <name type="common">Common stonewort</name>
    <dbReference type="NCBI Taxonomy" id="55564"/>
    <lineage>
        <taxon>Eukaryota</taxon>
        <taxon>Viridiplantae</taxon>
        <taxon>Streptophyta</taxon>
        <taxon>Charophyceae</taxon>
        <taxon>Charales</taxon>
        <taxon>Characeae</taxon>
        <taxon>Chara</taxon>
    </lineage>
</organism>
<gene>
    <name evidence="1" type="primary">psbI</name>
</gene>
<comment type="function">
    <text evidence="1">One of the components of the core complex of photosystem II (PSII), required for its stability and/or assembly. PSII is a light-driven water:plastoquinone oxidoreductase that uses light energy to abstract electrons from H(2)O, generating O(2) and a proton gradient subsequently used for ATP formation. It consists of a core antenna complex that captures photons, and an electron transfer chain that converts photonic excitation into a charge separation.</text>
</comment>
<comment type="subunit">
    <text evidence="1">PSII is composed of 1 copy each of membrane proteins PsbA, PsbB, PsbC, PsbD, PsbE, PsbF, PsbH, PsbI, PsbJ, PsbK, PsbL, PsbM, PsbT, PsbX, PsbY, PsbZ, Psb30/Ycf12, at least 3 peripheral proteins of the oxygen-evolving complex and a large number of cofactors. It forms dimeric complexes.</text>
</comment>
<comment type="subcellular location">
    <subcellularLocation>
        <location evidence="1">Plastid</location>
        <location evidence="1">Chloroplast thylakoid membrane</location>
        <topology evidence="1">Single-pass membrane protein</topology>
    </subcellularLocation>
</comment>
<comment type="similarity">
    <text evidence="1">Belongs to the PsbI family.</text>
</comment>
<reference key="1">
    <citation type="journal article" date="2006" name="Mol. Biol. Evol.">
        <title>The chloroplast genome sequence of Chara vulgaris sheds new light into the closest green algal relatives of land plants.</title>
        <authorList>
            <person name="Turmel M."/>
            <person name="Otis C."/>
            <person name="Lemieux C."/>
        </authorList>
    </citation>
    <scope>NUCLEOTIDE SEQUENCE [LARGE SCALE GENOMIC DNA]</scope>
</reference>
<protein>
    <recommendedName>
        <fullName evidence="1">Photosystem II reaction center protein I</fullName>
        <shortName evidence="1">PSII-I</shortName>
    </recommendedName>
    <alternativeName>
        <fullName evidence="1">PSII 4.8 kDa protein</fullName>
    </alternativeName>
</protein>
<sequence length="36" mass="4181">MLTLKLFVYTVVIFFISLFIFGFLSNDPGRNPGRKE</sequence>
<keyword id="KW-0150">Chloroplast</keyword>
<keyword id="KW-0472">Membrane</keyword>
<keyword id="KW-0602">Photosynthesis</keyword>
<keyword id="KW-0604">Photosystem II</keyword>
<keyword id="KW-0934">Plastid</keyword>
<keyword id="KW-0674">Reaction center</keyword>
<keyword id="KW-0793">Thylakoid</keyword>
<keyword id="KW-0812">Transmembrane</keyword>
<keyword id="KW-1133">Transmembrane helix</keyword>